<organism>
    <name type="scientific">Equus caballus</name>
    <name type="common">Horse</name>
    <dbReference type="NCBI Taxonomy" id="9796"/>
    <lineage>
        <taxon>Eukaryota</taxon>
        <taxon>Metazoa</taxon>
        <taxon>Chordata</taxon>
        <taxon>Craniata</taxon>
        <taxon>Vertebrata</taxon>
        <taxon>Euteleostomi</taxon>
        <taxon>Mammalia</taxon>
        <taxon>Eutheria</taxon>
        <taxon>Laurasiatheria</taxon>
        <taxon>Perissodactyla</taxon>
        <taxon>Equidae</taxon>
        <taxon>Equus</taxon>
    </lineage>
</organism>
<evidence type="ECO:0000250" key="1">
    <source>
        <dbReference type="UniProtKB" id="P02656"/>
    </source>
</evidence>
<evidence type="ECO:0000255" key="2"/>
<evidence type="ECO:0000305" key="3"/>
<protein>
    <recommendedName>
        <fullName>Apolipoprotein C-III</fullName>
        <shortName>Apo-CIII</shortName>
        <shortName>ApoC-III</shortName>
    </recommendedName>
    <alternativeName>
        <fullName>Apolipoprotein C3</fullName>
    </alternativeName>
</protein>
<accession>P0DN28</accession>
<sequence>MQPRVLLIAALLALLATAAEDKDASLLDVVQGYMQQASKTAKDTLTSMQESQVAQQARDWVNDGLSSLKDYWGKLKGKFSSFWDSTFEDTTPSPAVA</sequence>
<name>APOC3_HORSE</name>
<keyword id="KW-0162">Chylomicron</keyword>
<keyword id="KW-0325">Glycoprotein</keyword>
<keyword id="KW-0442">Lipid degradation</keyword>
<keyword id="KW-0443">Lipid metabolism</keyword>
<keyword id="KW-0445">Lipid transport</keyword>
<keyword id="KW-1185">Reference proteome</keyword>
<keyword id="KW-0964">Secreted</keyword>
<keyword id="KW-0730">Sialic acid</keyword>
<keyword id="KW-0732">Signal</keyword>
<keyword id="KW-0813">Transport</keyword>
<keyword id="KW-0850">VLDL</keyword>
<reference key="1">
    <citation type="journal article" date="2014" name="Sci. Rep.">
        <title>Analysis of horse genomes provides insight into the diversification and adaptive evolution of karyotype.</title>
        <authorList>
            <person name="Huang J."/>
            <person name="Zhao Y."/>
            <person name="Shiraigol W."/>
            <person name="Li B."/>
            <person name="Bai D."/>
            <person name="Ye W."/>
            <person name="Daidiikhuu D."/>
            <person name="Yang L."/>
            <person name="Jin B."/>
            <person name="Zhao Q."/>
            <person name="Gao Y."/>
            <person name="Wu J."/>
            <person name="Bao W."/>
            <person name="Li A."/>
            <person name="Zhang Y."/>
            <person name="Han H."/>
            <person name="Bai H."/>
            <person name="Bao Y."/>
            <person name="Zhao L."/>
            <person name="Zhai Z."/>
            <person name="Zhao W."/>
            <person name="Sun Z."/>
            <person name="Zhang Y."/>
            <person name="Meng H."/>
            <person name="Dugarjaviin M."/>
        </authorList>
    </citation>
    <scope>NUCLEOTIDE SEQUENCE [LARGE SCALE GENOMIC DNA]</scope>
    <source>
        <strain>Mongolian</strain>
    </source>
</reference>
<reference key="2">
    <citation type="unpublished observations" date="2015-07">
        <authorList>
            <person name="Puppione D.L."/>
        </authorList>
    </citation>
    <scope>IDENTIFICATION</scope>
</reference>
<comment type="function">
    <text evidence="1">Component of triglyceride-rich very low density lipoproteins (VLDL) and high density lipoproteins (HDL) in plasma. Plays a multifaceted role in triglyceride homeostasis. Intracellularly, promotes hepatic very low density lipoprotein 1 (VLDL1) assembly and secretion; extracellularly, attenuates hydrolysis and clearance of triglyceride-rich lipoproteins (TRLs). Impairs the lipolysis of TRLs by inhibiting lipoprotein lipase and the hepatic uptake of TRLs by remnant receptors. Formed of several curved helices connected via semiflexible hinges, so that it can wrap tightly around the curved micelle surface and easily adapt to the different diameters of its natural binding partners.</text>
</comment>
<comment type="subcellular location">
    <subcellularLocation>
        <location evidence="1">Secreted</location>
    </subcellularLocation>
</comment>
<comment type="similarity">
    <text evidence="3">Belongs to the apolipoprotein C3 family.</text>
</comment>
<dbReference type="EMBL" id="ATDM01002572">
    <property type="status" value="NOT_ANNOTATED_CDS"/>
    <property type="molecule type" value="Genomic_DNA"/>
</dbReference>
<dbReference type="SMR" id="P0DN28"/>
<dbReference type="FunCoup" id="P0DN28">
    <property type="interactions" value="119"/>
</dbReference>
<dbReference type="STRING" id="9796.ENSECAP00000039343"/>
<dbReference type="PaxDb" id="9796-ENSECAP00000039343"/>
<dbReference type="InParanoid" id="P0DN28"/>
<dbReference type="Proteomes" id="UP000002281">
    <property type="component" value="Unplaced"/>
</dbReference>
<dbReference type="GO" id="GO:0042627">
    <property type="term" value="C:chylomicron"/>
    <property type="evidence" value="ECO:0000318"/>
    <property type="project" value="GO_Central"/>
</dbReference>
<dbReference type="GO" id="GO:0034363">
    <property type="term" value="C:intermediate-density lipoprotein particle"/>
    <property type="evidence" value="ECO:0000318"/>
    <property type="project" value="GO_Central"/>
</dbReference>
<dbReference type="GO" id="GO:0034366">
    <property type="term" value="C:spherical high-density lipoprotein particle"/>
    <property type="evidence" value="ECO:0000318"/>
    <property type="project" value="GO_Central"/>
</dbReference>
<dbReference type="GO" id="GO:0034361">
    <property type="term" value="C:very-low-density lipoprotein particle"/>
    <property type="evidence" value="ECO:0000318"/>
    <property type="project" value="GO_Central"/>
</dbReference>
<dbReference type="GO" id="GO:0070653">
    <property type="term" value="F:high-density lipoprotein particle receptor binding"/>
    <property type="evidence" value="ECO:0000318"/>
    <property type="project" value="GO_Central"/>
</dbReference>
<dbReference type="GO" id="GO:0055102">
    <property type="term" value="F:lipase inhibitor activity"/>
    <property type="evidence" value="ECO:0000318"/>
    <property type="project" value="GO_Central"/>
</dbReference>
<dbReference type="GO" id="GO:0005543">
    <property type="term" value="F:phospholipid binding"/>
    <property type="evidence" value="ECO:0000318"/>
    <property type="project" value="GO_Central"/>
</dbReference>
<dbReference type="GO" id="GO:0042632">
    <property type="term" value="P:cholesterol homeostasis"/>
    <property type="evidence" value="ECO:0000318"/>
    <property type="project" value="GO_Central"/>
</dbReference>
<dbReference type="GO" id="GO:0006869">
    <property type="term" value="P:lipid transport"/>
    <property type="evidence" value="ECO:0007669"/>
    <property type="project" value="UniProtKB-KW"/>
</dbReference>
<dbReference type="GO" id="GO:0042157">
    <property type="term" value="P:lipoprotein metabolic process"/>
    <property type="evidence" value="ECO:0007669"/>
    <property type="project" value="InterPro"/>
</dbReference>
<dbReference type="GO" id="GO:0010987">
    <property type="term" value="P:negative regulation of high-density lipoprotein particle clearance"/>
    <property type="evidence" value="ECO:0000318"/>
    <property type="project" value="GO_Central"/>
</dbReference>
<dbReference type="GO" id="GO:0010989">
    <property type="term" value="P:negative regulation of low-density lipoprotein particle clearance"/>
    <property type="evidence" value="ECO:0000318"/>
    <property type="project" value="GO_Central"/>
</dbReference>
<dbReference type="GO" id="GO:0010897">
    <property type="term" value="P:negative regulation of triglyceride catabolic process"/>
    <property type="evidence" value="ECO:0000318"/>
    <property type="project" value="GO_Central"/>
</dbReference>
<dbReference type="GO" id="GO:0010916">
    <property type="term" value="P:negative regulation of very-low-density lipoprotein particle clearance"/>
    <property type="evidence" value="ECO:0000318"/>
    <property type="project" value="GO_Central"/>
</dbReference>
<dbReference type="GO" id="GO:0019433">
    <property type="term" value="P:triglyceride catabolic process"/>
    <property type="evidence" value="ECO:0000318"/>
    <property type="project" value="GO_Central"/>
</dbReference>
<dbReference type="GO" id="GO:0070328">
    <property type="term" value="P:triglyceride homeostasis"/>
    <property type="evidence" value="ECO:0000318"/>
    <property type="project" value="GO_Central"/>
</dbReference>
<dbReference type="Gene3D" id="6.10.90.10">
    <property type="entry name" value="Apolipoprotein CIII"/>
    <property type="match status" value="1"/>
</dbReference>
<dbReference type="InterPro" id="IPR008403">
    <property type="entry name" value="Apo-CIII"/>
</dbReference>
<dbReference type="InterPro" id="IPR038195">
    <property type="entry name" value="Apo_CIII_sf"/>
</dbReference>
<dbReference type="PANTHER" id="PTHR14225">
    <property type="entry name" value="APOLIPOPROTEIN C-III"/>
    <property type="match status" value="1"/>
</dbReference>
<dbReference type="PANTHER" id="PTHR14225:SF0">
    <property type="entry name" value="APOLIPOPROTEIN C-III"/>
    <property type="match status" value="1"/>
</dbReference>
<dbReference type="Pfam" id="PF05778">
    <property type="entry name" value="Apo-CIII"/>
    <property type="match status" value="1"/>
</dbReference>
<dbReference type="SUPFAM" id="SSF47162">
    <property type="entry name" value="Apolipoprotein"/>
    <property type="match status" value="1"/>
</dbReference>
<gene>
    <name type="primary">APOC3</name>
</gene>
<feature type="signal peptide" evidence="2">
    <location>
        <begin position="1"/>
        <end position="18"/>
    </location>
</feature>
<feature type="chain" id="PRO_0000433959" description="Apolipoprotein C-III" evidence="1">
    <location>
        <begin position="19"/>
        <end position="97"/>
    </location>
</feature>
<feature type="region of interest" description="Lipid-binding" evidence="1">
    <location>
        <begin position="66"/>
        <end position="97"/>
    </location>
</feature>
<feature type="site" description="May interact with the LDL receptor" evidence="1">
    <location>
        <position position="39"/>
    </location>
</feature>
<proteinExistence type="inferred from homology"/>